<keyword id="KW-0560">Oxidoreductase</keyword>
<keyword id="KW-0819">tRNA processing</keyword>
<proteinExistence type="inferred from homology"/>
<gene>
    <name evidence="1" type="primary">trhO</name>
    <name type="ordered locus">str0548</name>
</gene>
<name>TRHO_STRT1</name>
<comment type="function">
    <text evidence="1">Catalyzes oxygen-dependent 5-hydroxyuridine (ho5U) modification at position 34 in tRNAs.</text>
</comment>
<comment type="catalytic activity">
    <reaction evidence="1">
        <text>uridine(34) in tRNA + AH2 + O2 = 5-hydroxyuridine(34) in tRNA + A + H2O</text>
        <dbReference type="Rhea" id="RHEA:64224"/>
        <dbReference type="Rhea" id="RHEA-COMP:11727"/>
        <dbReference type="Rhea" id="RHEA-COMP:13381"/>
        <dbReference type="ChEBI" id="CHEBI:13193"/>
        <dbReference type="ChEBI" id="CHEBI:15377"/>
        <dbReference type="ChEBI" id="CHEBI:15379"/>
        <dbReference type="ChEBI" id="CHEBI:17499"/>
        <dbReference type="ChEBI" id="CHEBI:65315"/>
        <dbReference type="ChEBI" id="CHEBI:136877"/>
    </reaction>
</comment>
<comment type="similarity">
    <text evidence="1">Belongs to the TrhO family.</text>
</comment>
<dbReference type="EC" id="1.14.-.-" evidence="1"/>
<dbReference type="EMBL" id="CP000024">
    <property type="protein sequence ID" value="AAV62144.1"/>
    <property type="molecule type" value="Genomic_DNA"/>
</dbReference>
<dbReference type="RefSeq" id="WP_011226972.1">
    <property type="nucleotide sequence ID" value="NC_006449.1"/>
</dbReference>
<dbReference type="SMR" id="Q5M0V5"/>
<dbReference type="KEGG" id="stc:str0548"/>
<dbReference type="HOGENOM" id="CLU_038878_1_0_9"/>
<dbReference type="GO" id="GO:0016705">
    <property type="term" value="F:oxidoreductase activity, acting on paired donors, with incorporation or reduction of molecular oxygen"/>
    <property type="evidence" value="ECO:0007669"/>
    <property type="project" value="UniProtKB-UniRule"/>
</dbReference>
<dbReference type="GO" id="GO:0006400">
    <property type="term" value="P:tRNA modification"/>
    <property type="evidence" value="ECO:0007669"/>
    <property type="project" value="UniProtKB-UniRule"/>
</dbReference>
<dbReference type="CDD" id="cd01518">
    <property type="entry name" value="RHOD_YceA"/>
    <property type="match status" value="1"/>
</dbReference>
<dbReference type="Gene3D" id="3.30.70.100">
    <property type="match status" value="1"/>
</dbReference>
<dbReference type="Gene3D" id="3.40.250.10">
    <property type="entry name" value="Rhodanese-like domain"/>
    <property type="match status" value="1"/>
</dbReference>
<dbReference type="HAMAP" id="MF_00469">
    <property type="entry name" value="TrhO"/>
    <property type="match status" value="1"/>
</dbReference>
<dbReference type="InterPro" id="IPR001763">
    <property type="entry name" value="Rhodanese-like_dom"/>
</dbReference>
<dbReference type="InterPro" id="IPR036873">
    <property type="entry name" value="Rhodanese-like_dom_sf"/>
</dbReference>
<dbReference type="InterPro" id="IPR022111">
    <property type="entry name" value="Rhodanese_C"/>
</dbReference>
<dbReference type="InterPro" id="IPR020936">
    <property type="entry name" value="TrhO"/>
</dbReference>
<dbReference type="InterPro" id="IPR040503">
    <property type="entry name" value="TRHO_N"/>
</dbReference>
<dbReference type="NCBIfam" id="NF001135">
    <property type="entry name" value="PRK00142.1-3"/>
    <property type="match status" value="1"/>
</dbReference>
<dbReference type="NCBIfam" id="NF001137">
    <property type="entry name" value="PRK00142.1-5"/>
    <property type="match status" value="1"/>
</dbReference>
<dbReference type="PANTHER" id="PTHR43268:SF3">
    <property type="entry name" value="RHODANESE-LIKE DOMAIN-CONTAINING PROTEIN 7-RELATED"/>
    <property type="match status" value="1"/>
</dbReference>
<dbReference type="PANTHER" id="PTHR43268">
    <property type="entry name" value="THIOSULFATE SULFURTRANSFERASE/RHODANESE-LIKE DOMAIN-CONTAINING PROTEIN 2"/>
    <property type="match status" value="1"/>
</dbReference>
<dbReference type="Pfam" id="PF00581">
    <property type="entry name" value="Rhodanese"/>
    <property type="match status" value="1"/>
</dbReference>
<dbReference type="Pfam" id="PF12368">
    <property type="entry name" value="Rhodanese_C"/>
    <property type="match status" value="1"/>
</dbReference>
<dbReference type="Pfam" id="PF17773">
    <property type="entry name" value="UPF0176_N"/>
    <property type="match status" value="1"/>
</dbReference>
<dbReference type="SMART" id="SM00450">
    <property type="entry name" value="RHOD"/>
    <property type="match status" value="1"/>
</dbReference>
<dbReference type="SUPFAM" id="SSF52821">
    <property type="entry name" value="Rhodanese/Cell cycle control phosphatase"/>
    <property type="match status" value="1"/>
</dbReference>
<dbReference type="PROSITE" id="PS50206">
    <property type="entry name" value="RHODANESE_3"/>
    <property type="match status" value="1"/>
</dbReference>
<protein>
    <recommendedName>
        <fullName evidence="1">tRNA uridine(34) hydroxylase</fullName>
        <ecNumber evidence="1">1.14.-.-</ecNumber>
    </recommendedName>
    <alternativeName>
        <fullName evidence="1">tRNA hydroxylation protein O</fullName>
    </alternativeName>
</protein>
<sequence>MAKPIRVLLYYKYVPIENAEQFAADHLAFCKSIGLKGRILVADEGINGTVSGDYETTQKYMDYVHSLPGMEDLWFKIDEEEEQAFKKMFVRYKKEIVHLGLEDNNFDSDINPLETTGAYLSPKEFKDALLDEDTVVLDTRNDYEYDLGHFRGAIRPDIRNFRELPQWVRDHKEEFMDKRVVVYCTGGVRCEKFSGWLVREGYKDVGQLHGGIVTYGKDPEVQGELWDGKLYVFDERIAVDVNHVDPIVVGKDWFDGTPCERYVNCGNPFCNRRILTSEENEDKYLRGCSHECRVHPRNRYVSENDLSQEEVVERLAAIGESLDVTPA</sequence>
<feature type="chain" id="PRO_0000161529" description="tRNA uridine(34) hydroxylase">
    <location>
        <begin position="1"/>
        <end position="327"/>
    </location>
</feature>
<feature type="domain" description="Rhodanese" evidence="1">
    <location>
        <begin position="130"/>
        <end position="224"/>
    </location>
</feature>
<feature type="active site" description="Cysteine persulfide intermediate" evidence="1">
    <location>
        <position position="184"/>
    </location>
</feature>
<evidence type="ECO:0000255" key="1">
    <source>
        <dbReference type="HAMAP-Rule" id="MF_00469"/>
    </source>
</evidence>
<organism>
    <name type="scientific">Streptococcus thermophilus (strain CNRZ 1066)</name>
    <dbReference type="NCBI Taxonomy" id="299768"/>
    <lineage>
        <taxon>Bacteria</taxon>
        <taxon>Bacillati</taxon>
        <taxon>Bacillota</taxon>
        <taxon>Bacilli</taxon>
        <taxon>Lactobacillales</taxon>
        <taxon>Streptococcaceae</taxon>
        <taxon>Streptococcus</taxon>
    </lineage>
</organism>
<reference key="1">
    <citation type="journal article" date="2004" name="Nat. Biotechnol.">
        <title>Complete sequence and comparative genome analysis of the dairy bacterium Streptococcus thermophilus.</title>
        <authorList>
            <person name="Bolotin A."/>
            <person name="Quinquis B."/>
            <person name="Renault P."/>
            <person name="Sorokin A."/>
            <person name="Ehrlich S.D."/>
            <person name="Kulakauskas S."/>
            <person name="Lapidus A."/>
            <person name="Goltsman E."/>
            <person name="Mazur M."/>
            <person name="Pusch G.D."/>
            <person name="Fonstein M."/>
            <person name="Overbeek R."/>
            <person name="Kyprides N."/>
            <person name="Purnelle B."/>
            <person name="Prozzi D."/>
            <person name="Ngui K."/>
            <person name="Masuy D."/>
            <person name="Hancy F."/>
            <person name="Burteau S."/>
            <person name="Boutry M."/>
            <person name="Delcour J."/>
            <person name="Goffeau A."/>
            <person name="Hols P."/>
        </authorList>
    </citation>
    <scope>NUCLEOTIDE SEQUENCE [LARGE SCALE GENOMIC DNA]</scope>
    <source>
        <strain>CNRZ 1066</strain>
    </source>
</reference>
<accession>Q5M0V5</accession>